<organism>
    <name type="scientific">Streptococcus sanguinis (strain SK36)</name>
    <dbReference type="NCBI Taxonomy" id="388919"/>
    <lineage>
        <taxon>Bacteria</taxon>
        <taxon>Bacillati</taxon>
        <taxon>Bacillota</taxon>
        <taxon>Bacilli</taxon>
        <taxon>Lactobacillales</taxon>
        <taxon>Streptococcaceae</taxon>
        <taxon>Streptococcus</taxon>
    </lineage>
</organism>
<comment type="function">
    <text evidence="1">Catalyzes a reversible aldol reaction between acetaldehyde and D-glyceraldehyde 3-phosphate to generate 2-deoxy-D-ribose 5-phosphate.</text>
</comment>
<comment type="catalytic activity">
    <reaction evidence="1">
        <text>2-deoxy-D-ribose 5-phosphate = D-glyceraldehyde 3-phosphate + acetaldehyde</text>
        <dbReference type="Rhea" id="RHEA:12821"/>
        <dbReference type="ChEBI" id="CHEBI:15343"/>
        <dbReference type="ChEBI" id="CHEBI:59776"/>
        <dbReference type="ChEBI" id="CHEBI:62877"/>
        <dbReference type="EC" id="4.1.2.4"/>
    </reaction>
</comment>
<comment type="pathway">
    <text evidence="1">Carbohydrate degradation; 2-deoxy-D-ribose 1-phosphate degradation; D-glyceraldehyde 3-phosphate and acetaldehyde from 2-deoxy-alpha-D-ribose 1-phosphate: step 2/2.</text>
</comment>
<comment type="subcellular location">
    <subcellularLocation>
        <location evidence="1">Cytoplasm</location>
    </subcellularLocation>
</comment>
<comment type="similarity">
    <text evidence="1">Belongs to the DeoC/FbaB aldolase family. DeoC type 1 subfamily.</text>
</comment>
<accession>A3CMP6</accession>
<feature type="chain" id="PRO_1000015337" description="Deoxyribose-phosphate aldolase">
    <location>
        <begin position="1"/>
        <end position="220"/>
    </location>
</feature>
<feature type="active site" description="Proton donor/acceptor" evidence="1">
    <location>
        <position position="89"/>
    </location>
</feature>
<feature type="active site" description="Schiff-base intermediate with acetaldehyde" evidence="1">
    <location>
        <position position="151"/>
    </location>
</feature>
<feature type="active site" description="Proton donor/acceptor" evidence="1">
    <location>
        <position position="180"/>
    </location>
</feature>
<keyword id="KW-0963">Cytoplasm</keyword>
<keyword id="KW-0456">Lyase</keyword>
<keyword id="KW-1185">Reference proteome</keyword>
<keyword id="KW-0704">Schiff base</keyword>
<proteinExistence type="inferred from homology"/>
<reference key="1">
    <citation type="journal article" date="2007" name="J. Bacteriol.">
        <title>Genome of the opportunistic pathogen Streptococcus sanguinis.</title>
        <authorList>
            <person name="Xu P."/>
            <person name="Alves J.M."/>
            <person name="Kitten T."/>
            <person name="Brown A."/>
            <person name="Chen Z."/>
            <person name="Ozaki L.S."/>
            <person name="Manque P."/>
            <person name="Ge X."/>
            <person name="Serrano M.G."/>
            <person name="Puiu D."/>
            <person name="Hendricks S."/>
            <person name="Wang Y."/>
            <person name="Chaplin M.D."/>
            <person name="Akan D."/>
            <person name="Paik S."/>
            <person name="Peterson D.L."/>
            <person name="Macrina F.L."/>
            <person name="Buck G.A."/>
        </authorList>
    </citation>
    <scope>NUCLEOTIDE SEQUENCE [LARGE SCALE GENOMIC DNA]</scope>
    <source>
        <strain>SK36</strain>
    </source>
</reference>
<dbReference type="EC" id="4.1.2.4" evidence="1"/>
<dbReference type="EMBL" id="CP000387">
    <property type="protein sequence ID" value="ABN44451.1"/>
    <property type="molecule type" value="Genomic_DNA"/>
</dbReference>
<dbReference type="RefSeq" id="WP_011836882.1">
    <property type="nucleotide sequence ID" value="NC_009009.1"/>
</dbReference>
<dbReference type="RefSeq" id="YP_001035001.1">
    <property type="nucleotide sequence ID" value="NC_009009.1"/>
</dbReference>
<dbReference type="SMR" id="A3CMP6"/>
<dbReference type="STRING" id="388919.SSA_1036"/>
<dbReference type="KEGG" id="ssa:SSA_1036"/>
<dbReference type="PATRIC" id="fig|388919.9.peg.983"/>
<dbReference type="eggNOG" id="COG0274">
    <property type="taxonomic scope" value="Bacteria"/>
</dbReference>
<dbReference type="HOGENOM" id="CLU_053595_0_1_9"/>
<dbReference type="OrthoDB" id="9778711at2"/>
<dbReference type="UniPathway" id="UPA00002">
    <property type="reaction ID" value="UER00468"/>
</dbReference>
<dbReference type="Proteomes" id="UP000002148">
    <property type="component" value="Chromosome"/>
</dbReference>
<dbReference type="GO" id="GO:0005737">
    <property type="term" value="C:cytoplasm"/>
    <property type="evidence" value="ECO:0007669"/>
    <property type="project" value="UniProtKB-SubCell"/>
</dbReference>
<dbReference type="GO" id="GO:0004139">
    <property type="term" value="F:deoxyribose-phosphate aldolase activity"/>
    <property type="evidence" value="ECO:0007669"/>
    <property type="project" value="UniProtKB-UniRule"/>
</dbReference>
<dbReference type="GO" id="GO:0006018">
    <property type="term" value="P:2-deoxyribose 1-phosphate catabolic process"/>
    <property type="evidence" value="ECO:0007669"/>
    <property type="project" value="UniProtKB-UniRule"/>
</dbReference>
<dbReference type="GO" id="GO:0016052">
    <property type="term" value="P:carbohydrate catabolic process"/>
    <property type="evidence" value="ECO:0007669"/>
    <property type="project" value="TreeGrafter"/>
</dbReference>
<dbReference type="GO" id="GO:0009264">
    <property type="term" value="P:deoxyribonucleotide catabolic process"/>
    <property type="evidence" value="ECO:0007669"/>
    <property type="project" value="InterPro"/>
</dbReference>
<dbReference type="CDD" id="cd00959">
    <property type="entry name" value="DeoC"/>
    <property type="match status" value="1"/>
</dbReference>
<dbReference type="FunFam" id="3.20.20.70:FF:000044">
    <property type="entry name" value="Deoxyribose-phosphate aldolase"/>
    <property type="match status" value="1"/>
</dbReference>
<dbReference type="Gene3D" id="3.20.20.70">
    <property type="entry name" value="Aldolase class I"/>
    <property type="match status" value="1"/>
</dbReference>
<dbReference type="HAMAP" id="MF_00114">
    <property type="entry name" value="DeoC_type1"/>
    <property type="match status" value="1"/>
</dbReference>
<dbReference type="InterPro" id="IPR013785">
    <property type="entry name" value="Aldolase_TIM"/>
</dbReference>
<dbReference type="InterPro" id="IPR011343">
    <property type="entry name" value="DeoC"/>
</dbReference>
<dbReference type="InterPro" id="IPR002915">
    <property type="entry name" value="DeoC/FbaB/LacD_aldolase"/>
</dbReference>
<dbReference type="InterPro" id="IPR028581">
    <property type="entry name" value="DeoC_typeI"/>
</dbReference>
<dbReference type="NCBIfam" id="TIGR00126">
    <property type="entry name" value="deoC"/>
    <property type="match status" value="1"/>
</dbReference>
<dbReference type="PANTHER" id="PTHR10889">
    <property type="entry name" value="DEOXYRIBOSE-PHOSPHATE ALDOLASE"/>
    <property type="match status" value="1"/>
</dbReference>
<dbReference type="PANTHER" id="PTHR10889:SF1">
    <property type="entry name" value="DEOXYRIBOSE-PHOSPHATE ALDOLASE"/>
    <property type="match status" value="1"/>
</dbReference>
<dbReference type="Pfam" id="PF01791">
    <property type="entry name" value="DeoC"/>
    <property type="match status" value="1"/>
</dbReference>
<dbReference type="PIRSF" id="PIRSF001357">
    <property type="entry name" value="DeoC"/>
    <property type="match status" value="1"/>
</dbReference>
<dbReference type="SMART" id="SM01133">
    <property type="entry name" value="DeoC"/>
    <property type="match status" value="1"/>
</dbReference>
<dbReference type="SUPFAM" id="SSF51569">
    <property type="entry name" value="Aldolase"/>
    <property type="match status" value="1"/>
</dbReference>
<sequence>MKLNKYIDHTLLKPEASEEQILKLIEEAKVYDFASICVNPTWIEFAAEQLKGSDVKVCVPIGFPLGANTSDVKAFETKDAIQKGAGEVDMVINVGALKSKNYDLVERDIRAVVEAANGTLVKVILETCLLTDEEKVKACQLAQKAGADFVKTSTGFSTGGATVEDVALMRKTVGPDMGVKASGGARSYEDALAFIEAGATRIGTSAGVAIMKGEEASGDY</sequence>
<gene>
    <name evidence="1" type="primary">deoC</name>
    <name type="ordered locus">SSA_1036</name>
</gene>
<name>DEOC_STRSV</name>
<protein>
    <recommendedName>
        <fullName evidence="1">Deoxyribose-phosphate aldolase</fullName>
        <shortName evidence="1">DERA</shortName>
        <ecNumber evidence="1">4.1.2.4</ecNumber>
    </recommendedName>
    <alternativeName>
        <fullName evidence="1">2-deoxy-D-ribose 5-phosphate aldolase</fullName>
    </alternativeName>
    <alternativeName>
        <fullName evidence="1">Phosphodeoxyriboaldolase</fullName>
        <shortName evidence="1">Deoxyriboaldolase</shortName>
    </alternativeName>
</protein>
<evidence type="ECO:0000255" key="1">
    <source>
        <dbReference type="HAMAP-Rule" id="MF_00114"/>
    </source>
</evidence>